<reference key="1">
    <citation type="journal article" date="1994" name="Gene">
        <title>Cloning and sequence of the structural (hupSLC) and accessory (hupDHI) genes for hydrogenase biosynthesis in Thiocapsa roseopersicina.</title>
        <authorList>
            <person name="Colbeau A.A."/>
            <person name="Kovacs K.K."/>
            <person name="Chabert J.J."/>
            <person name="Vignais P.P.M."/>
        </authorList>
    </citation>
    <scope>NUCLEOTIDE SEQUENCE [GENOMIC DNA]</scope>
</reference>
<gene>
    <name type="primary">hupD</name>
</gene>
<protein>
    <recommendedName>
        <fullName>Hydrogenase expression/formation protein HupD</fullName>
    </recommendedName>
</protein>
<sequence length="221" mass="24341">MRSDPEILVLGIGNLLWADEGFGVRAVEALQRHWVMSSNVQLLDGGTQGIYLVDRVRKADVLVVFDAVDYGLPPGTMKRVEDDEVPRFLGAKKMSLHQTGFQEVLALAAMLGDYPKHLLLIGVQPVELDDFGGSLRPQIKERITPAIEMALEYLAQFGVVARRREDSTVDSPHLPHPSLDLIAYESGRPGPEIACRIGDERVLTSLSARTVQPGNPHGDRQ</sequence>
<dbReference type="EMBL" id="L22980">
    <property type="protein sequence ID" value="AAA27412.1"/>
    <property type="molecule type" value="Genomic_DNA"/>
</dbReference>
<dbReference type="SMR" id="Q56362"/>
<dbReference type="STRING" id="1058.SAMN05421783_10324"/>
<dbReference type="MEROPS" id="A31.002"/>
<dbReference type="GO" id="GO:0004190">
    <property type="term" value="F:aspartic-type endopeptidase activity"/>
    <property type="evidence" value="ECO:0007669"/>
    <property type="project" value="UniProtKB-KW"/>
</dbReference>
<dbReference type="GO" id="GO:0008047">
    <property type="term" value="F:enzyme activator activity"/>
    <property type="evidence" value="ECO:0007669"/>
    <property type="project" value="InterPro"/>
</dbReference>
<dbReference type="GO" id="GO:0046872">
    <property type="term" value="F:metal ion binding"/>
    <property type="evidence" value="ECO:0007669"/>
    <property type="project" value="UniProtKB-KW"/>
</dbReference>
<dbReference type="GO" id="GO:0016485">
    <property type="term" value="P:protein processing"/>
    <property type="evidence" value="ECO:0007669"/>
    <property type="project" value="InterPro"/>
</dbReference>
<dbReference type="CDD" id="cd06062">
    <property type="entry name" value="H2MP_MemB-H2up"/>
    <property type="match status" value="1"/>
</dbReference>
<dbReference type="FunFam" id="3.40.50.1450:FF:000002">
    <property type="entry name" value="Hydrogenase 1 maturation protease"/>
    <property type="match status" value="1"/>
</dbReference>
<dbReference type="Gene3D" id="3.40.50.1450">
    <property type="entry name" value="HybD-like"/>
    <property type="match status" value="1"/>
</dbReference>
<dbReference type="InterPro" id="IPR004419">
    <property type="entry name" value="Pept_A31_hyd_express"/>
</dbReference>
<dbReference type="InterPro" id="IPR023430">
    <property type="entry name" value="Pept_HybD-like_dom_sf"/>
</dbReference>
<dbReference type="InterPro" id="IPR000671">
    <property type="entry name" value="Peptidase_A31"/>
</dbReference>
<dbReference type="NCBIfam" id="TIGR00140">
    <property type="entry name" value="hupD"/>
    <property type="match status" value="1"/>
</dbReference>
<dbReference type="NCBIfam" id="TIGR00072">
    <property type="entry name" value="hydrog_prot"/>
    <property type="match status" value="1"/>
</dbReference>
<dbReference type="PANTHER" id="PTHR30302">
    <property type="entry name" value="HYDROGENASE 1 MATURATION PROTEASE"/>
    <property type="match status" value="1"/>
</dbReference>
<dbReference type="PANTHER" id="PTHR30302:SF1">
    <property type="entry name" value="HYDROGENASE 2 MATURATION PROTEASE"/>
    <property type="match status" value="1"/>
</dbReference>
<dbReference type="Pfam" id="PF01750">
    <property type="entry name" value="HycI"/>
    <property type="match status" value="1"/>
</dbReference>
<dbReference type="PRINTS" id="PR00446">
    <property type="entry name" value="HYDRGNUPTAKE"/>
</dbReference>
<dbReference type="SUPFAM" id="SSF53163">
    <property type="entry name" value="HybD-like"/>
    <property type="match status" value="1"/>
</dbReference>
<name>HUPD_THIRO</name>
<accession>Q56362</accession>
<organism>
    <name type="scientific">Thiocapsa roseopersicina</name>
    <dbReference type="NCBI Taxonomy" id="1058"/>
    <lineage>
        <taxon>Bacteria</taxon>
        <taxon>Pseudomonadati</taxon>
        <taxon>Pseudomonadota</taxon>
        <taxon>Gammaproteobacteria</taxon>
        <taxon>Chromatiales</taxon>
        <taxon>Chromatiaceae</taxon>
        <taxon>Thiocapsa</taxon>
    </lineage>
</organism>
<feature type="chain" id="PRO_0000201941" description="Hydrogenase expression/formation protein HupD">
    <location>
        <begin position="1"/>
        <end position="221"/>
    </location>
</feature>
<feature type="binding site" evidence="1">
    <location>
        <position position="20"/>
    </location>
    <ligand>
        <name>Ni(2+)</name>
        <dbReference type="ChEBI" id="CHEBI:49786"/>
    </ligand>
</feature>
<feature type="binding site" evidence="1">
    <location>
        <position position="66"/>
    </location>
    <ligand>
        <name>Ni(2+)</name>
        <dbReference type="ChEBI" id="CHEBI:49786"/>
    </ligand>
</feature>
<feature type="binding site" evidence="1">
    <location>
        <position position="97"/>
    </location>
    <ligand>
        <name>Ni(2+)</name>
        <dbReference type="ChEBI" id="CHEBI:49786"/>
    </ligand>
</feature>
<proteinExistence type="inferred from homology"/>
<keyword id="KW-0064">Aspartyl protease</keyword>
<keyword id="KW-0378">Hydrolase</keyword>
<keyword id="KW-0479">Metal-binding</keyword>
<keyword id="KW-0533">Nickel</keyword>
<keyword id="KW-0645">Protease</keyword>
<comment type="function">
    <text>Not known. Could be involved in the processing of hydrogenase.</text>
</comment>
<comment type="similarity">
    <text evidence="2">Belongs to the peptidase A31 family.</text>
</comment>
<evidence type="ECO:0000250" key="1"/>
<evidence type="ECO:0000305" key="2"/>